<name>IDI2_STRP6</name>
<gene>
    <name evidence="1" type="primary">fni</name>
    <name type="ordered locus">M6_Spy0702</name>
</gene>
<comment type="function">
    <text evidence="1">Involved in the biosynthesis of isoprenoids. Catalyzes the 1,3-allylic rearrangement of the homoallylic substrate isopentenyl (IPP) to its allylic isomer, dimethylallyl diphosphate (DMAPP).</text>
</comment>
<comment type="catalytic activity">
    <reaction evidence="1">
        <text>isopentenyl diphosphate = dimethylallyl diphosphate</text>
        <dbReference type="Rhea" id="RHEA:23284"/>
        <dbReference type="ChEBI" id="CHEBI:57623"/>
        <dbReference type="ChEBI" id="CHEBI:128769"/>
        <dbReference type="EC" id="5.3.3.2"/>
    </reaction>
</comment>
<comment type="cofactor">
    <cofactor evidence="1">
        <name>FMN</name>
        <dbReference type="ChEBI" id="CHEBI:58210"/>
    </cofactor>
</comment>
<comment type="cofactor">
    <cofactor evidence="1">
        <name>NADPH</name>
        <dbReference type="ChEBI" id="CHEBI:57783"/>
    </cofactor>
</comment>
<comment type="cofactor">
    <cofactor evidence="1">
        <name>Mg(2+)</name>
        <dbReference type="ChEBI" id="CHEBI:18420"/>
    </cofactor>
</comment>
<comment type="subunit">
    <text evidence="1">Homooctamer. Dimer of tetramers.</text>
</comment>
<comment type="subcellular location">
    <subcellularLocation>
        <location evidence="1">Cytoplasm</location>
    </subcellularLocation>
</comment>
<comment type="similarity">
    <text evidence="1">Belongs to the IPP isomerase type 2 family.</text>
</comment>
<comment type="sequence caution" evidence="2">
    <conflict type="erroneous initiation">
        <sequence resource="EMBL-CDS" id="AAT86837"/>
    </conflict>
    <text>Extended N-terminus.</text>
</comment>
<evidence type="ECO:0000255" key="1">
    <source>
        <dbReference type="HAMAP-Rule" id="MF_00354"/>
    </source>
</evidence>
<evidence type="ECO:0000305" key="2"/>
<organism>
    <name type="scientific">Streptococcus pyogenes serotype M6 (strain ATCC BAA-946 / MGAS10394)</name>
    <dbReference type="NCBI Taxonomy" id="286636"/>
    <lineage>
        <taxon>Bacteria</taxon>
        <taxon>Bacillati</taxon>
        <taxon>Bacillota</taxon>
        <taxon>Bacilli</taxon>
        <taxon>Lactobacillales</taxon>
        <taxon>Streptococcaceae</taxon>
        <taxon>Streptococcus</taxon>
    </lineage>
</organism>
<dbReference type="EC" id="5.3.3.2" evidence="1"/>
<dbReference type="EMBL" id="CP000003">
    <property type="protein sequence ID" value="AAT86837.1"/>
    <property type="status" value="ALT_INIT"/>
    <property type="molecule type" value="Genomic_DNA"/>
</dbReference>
<dbReference type="RefSeq" id="WP_010922169.1">
    <property type="nucleotide sequence ID" value="NC_006086.1"/>
</dbReference>
<dbReference type="SMR" id="Q5XCM6"/>
<dbReference type="GeneID" id="69901016"/>
<dbReference type="KEGG" id="spa:M6_Spy0702"/>
<dbReference type="HOGENOM" id="CLU_065515_0_0_9"/>
<dbReference type="Proteomes" id="UP000001167">
    <property type="component" value="Chromosome"/>
</dbReference>
<dbReference type="GO" id="GO:0005737">
    <property type="term" value="C:cytoplasm"/>
    <property type="evidence" value="ECO:0007669"/>
    <property type="project" value="UniProtKB-SubCell"/>
</dbReference>
<dbReference type="GO" id="GO:0010181">
    <property type="term" value="F:FMN binding"/>
    <property type="evidence" value="ECO:0007669"/>
    <property type="project" value="UniProtKB-UniRule"/>
</dbReference>
<dbReference type="GO" id="GO:0004452">
    <property type="term" value="F:isopentenyl-diphosphate delta-isomerase activity"/>
    <property type="evidence" value="ECO:0007669"/>
    <property type="project" value="UniProtKB-UniRule"/>
</dbReference>
<dbReference type="GO" id="GO:0000287">
    <property type="term" value="F:magnesium ion binding"/>
    <property type="evidence" value="ECO:0007669"/>
    <property type="project" value="UniProtKB-UniRule"/>
</dbReference>
<dbReference type="GO" id="GO:0070402">
    <property type="term" value="F:NADPH binding"/>
    <property type="evidence" value="ECO:0007669"/>
    <property type="project" value="UniProtKB-UniRule"/>
</dbReference>
<dbReference type="GO" id="GO:0016491">
    <property type="term" value="F:oxidoreductase activity"/>
    <property type="evidence" value="ECO:0007669"/>
    <property type="project" value="InterPro"/>
</dbReference>
<dbReference type="GO" id="GO:0008299">
    <property type="term" value="P:isoprenoid biosynthetic process"/>
    <property type="evidence" value="ECO:0007669"/>
    <property type="project" value="UniProtKB-UniRule"/>
</dbReference>
<dbReference type="CDD" id="cd02811">
    <property type="entry name" value="IDI-2_FMN"/>
    <property type="match status" value="1"/>
</dbReference>
<dbReference type="Gene3D" id="3.20.20.70">
    <property type="entry name" value="Aldolase class I"/>
    <property type="match status" value="1"/>
</dbReference>
<dbReference type="HAMAP" id="MF_00354">
    <property type="entry name" value="Idi_2"/>
    <property type="match status" value="1"/>
</dbReference>
<dbReference type="InterPro" id="IPR013785">
    <property type="entry name" value="Aldolase_TIM"/>
</dbReference>
<dbReference type="InterPro" id="IPR000262">
    <property type="entry name" value="FMN-dep_DH"/>
</dbReference>
<dbReference type="InterPro" id="IPR011179">
    <property type="entry name" value="IPdP_isomerase"/>
</dbReference>
<dbReference type="NCBIfam" id="TIGR02151">
    <property type="entry name" value="IPP_isom_2"/>
    <property type="match status" value="1"/>
</dbReference>
<dbReference type="PANTHER" id="PTHR43665">
    <property type="entry name" value="ISOPENTENYL-DIPHOSPHATE DELTA-ISOMERASE"/>
    <property type="match status" value="1"/>
</dbReference>
<dbReference type="PANTHER" id="PTHR43665:SF1">
    <property type="entry name" value="ISOPENTENYL-DIPHOSPHATE DELTA-ISOMERASE"/>
    <property type="match status" value="1"/>
</dbReference>
<dbReference type="Pfam" id="PF01070">
    <property type="entry name" value="FMN_dh"/>
    <property type="match status" value="2"/>
</dbReference>
<dbReference type="PIRSF" id="PIRSF003314">
    <property type="entry name" value="IPP_isomerase"/>
    <property type="match status" value="1"/>
</dbReference>
<dbReference type="SUPFAM" id="SSF51395">
    <property type="entry name" value="FMN-linked oxidoreductases"/>
    <property type="match status" value="1"/>
</dbReference>
<feature type="chain" id="PRO_0000134435" description="Isopentenyl-diphosphate delta-isomerase">
    <location>
        <begin position="1"/>
        <end position="329"/>
    </location>
</feature>
<feature type="binding site" evidence="1">
    <location>
        <begin position="4"/>
        <end position="5"/>
    </location>
    <ligand>
        <name>substrate</name>
    </ligand>
</feature>
<feature type="binding site" evidence="1">
    <location>
        <begin position="59"/>
        <end position="61"/>
    </location>
    <ligand>
        <name>FMN</name>
        <dbReference type="ChEBI" id="CHEBI:58210"/>
    </ligand>
</feature>
<feature type="binding site" evidence="1">
    <location>
        <position position="89"/>
    </location>
    <ligand>
        <name>FMN</name>
        <dbReference type="ChEBI" id="CHEBI:58210"/>
    </ligand>
</feature>
<feature type="binding site" evidence="1">
    <location>
        <position position="116"/>
    </location>
    <ligand>
        <name>FMN</name>
        <dbReference type="ChEBI" id="CHEBI:58210"/>
    </ligand>
</feature>
<feature type="binding site" evidence="1">
    <location>
        <position position="146"/>
    </location>
    <ligand>
        <name>substrate</name>
    </ligand>
</feature>
<feature type="binding site" evidence="1">
    <location>
        <position position="147"/>
    </location>
    <ligand>
        <name>Mg(2+)</name>
        <dbReference type="ChEBI" id="CHEBI:18420"/>
    </ligand>
</feature>
<feature type="binding site" evidence="1">
    <location>
        <position position="178"/>
    </location>
    <ligand>
        <name>FMN</name>
        <dbReference type="ChEBI" id="CHEBI:58210"/>
    </ligand>
</feature>
<feature type="binding site" evidence="1">
    <location>
        <position position="203"/>
    </location>
    <ligand>
        <name>FMN</name>
        <dbReference type="ChEBI" id="CHEBI:58210"/>
    </ligand>
</feature>
<feature type="binding site" evidence="1">
    <location>
        <position position="208"/>
    </location>
    <ligand>
        <name>FMN</name>
        <dbReference type="ChEBI" id="CHEBI:58210"/>
    </ligand>
</feature>
<feature type="binding site" evidence="1">
    <location>
        <begin position="252"/>
        <end position="254"/>
    </location>
    <ligand>
        <name>FMN</name>
        <dbReference type="ChEBI" id="CHEBI:58210"/>
    </ligand>
</feature>
<feature type="binding site" evidence="1">
    <location>
        <begin position="273"/>
        <end position="274"/>
    </location>
    <ligand>
        <name>FMN</name>
        <dbReference type="ChEBI" id="CHEBI:58210"/>
    </ligand>
</feature>
<reference key="1">
    <citation type="journal article" date="2004" name="J. Infect. Dis.">
        <title>Progress toward characterization of the group A Streptococcus metagenome: complete genome sequence of a macrolide-resistant serotype M6 strain.</title>
        <authorList>
            <person name="Banks D.J."/>
            <person name="Porcella S.F."/>
            <person name="Barbian K.D."/>
            <person name="Beres S.B."/>
            <person name="Philips L.E."/>
            <person name="Voyich J.M."/>
            <person name="DeLeo F.R."/>
            <person name="Martin J.M."/>
            <person name="Somerville G.A."/>
            <person name="Musser J.M."/>
        </authorList>
    </citation>
    <scope>NUCLEOTIDE SEQUENCE [LARGE SCALE GENOMIC DNA]</scope>
    <source>
        <strain>ATCC BAA-946 / MGAS10394</strain>
    </source>
</reference>
<sequence length="329" mass="36649">MTNRKDDHIKYALKYQSPYNAFDDIELIHHSLPSYDLSDIDLSTHFAGQDFDFPFYINAMTGGSQKGKAVNEKLAKVAAATGIVMVTGSYSAALKNPNDDSYRLHEVADNLKLATNIGLDKPVALGQQTVQEMQPLFLQVHVNVMQELLMPEGERVFHTWKKHLAEYASQIPVPVILKEVGFGMDVNSIKLAHDLGIQTFDISGRGGTSFAYIENQRGGDRSYLNDWGQTTVQCLLNAQGLMDQVEILASGGVRHPLDMIKCFVLGARAVGLSRTVLELVEKYPTERVIAIVNGWKEELKIIMCALDCKTIKELKGVDYLLYGRLQQVN</sequence>
<protein>
    <recommendedName>
        <fullName evidence="1">Isopentenyl-diphosphate delta-isomerase</fullName>
        <shortName evidence="1">IPP isomerase</shortName>
        <ecNumber evidence="1">5.3.3.2</ecNumber>
    </recommendedName>
    <alternativeName>
        <fullName evidence="1">Isopentenyl diphosphate:dimethylallyl diphosphate isomerase</fullName>
    </alternativeName>
    <alternativeName>
        <fullName evidence="1">Isopentenyl pyrophosphate isomerase</fullName>
    </alternativeName>
    <alternativeName>
        <fullName evidence="1">Type 2 isopentenyl diphosphate isomerase</fullName>
        <shortName evidence="1">IDI-2</shortName>
    </alternativeName>
</protein>
<keyword id="KW-0963">Cytoplasm</keyword>
<keyword id="KW-0285">Flavoprotein</keyword>
<keyword id="KW-0288">FMN</keyword>
<keyword id="KW-0413">Isomerase</keyword>
<keyword id="KW-0414">Isoprene biosynthesis</keyword>
<keyword id="KW-0460">Magnesium</keyword>
<keyword id="KW-0479">Metal-binding</keyword>
<keyword id="KW-0521">NADP</keyword>
<proteinExistence type="inferred from homology"/>
<accession>Q5XCM6</accession>